<accession>P0CZ88</accession>
<accession>Q8K8I8</accession>
<sequence>MDTRPIGFLDSGVGGLTVVCELIRQLPHEKIVYIGDSARAPYGPRPKKQIKEYTWELVNFLLTQNVKMIVFACNTATAVAWEEVKAALDIPVLGVVLPGASAAIKSTTKGQVGVIGTPMTVASDIYRKKIQLLAPSVQVRSLACPKFVPIVESNEMCSSIAKKIVYDSLAPLVGKIDTLVLGCTHYPLLRPIIQNVMGPSVKLIDSGAECVRDISVLLNYFDINGNYHQKAVKHRFFTTANPEIFQEIASIWLKQKINVEHVTL</sequence>
<proteinExistence type="inferred from homology"/>
<keyword id="KW-0133">Cell shape</keyword>
<keyword id="KW-0961">Cell wall biogenesis/degradation</keyword>
<keyword id="KW-0413">Isomerase</keyword>
<keyword id="KW-0573">Peptidoglycan synthesis</keyword>
<name>MURI_STRP3</name>
<dbReference type="EC" id="5.1.1.3" evidence="1"/>
<dbReference type="EMBL" id="AE014074">
    <property type="protein sequence ID" value="AAM78869.1"/>
    <property type="molecule type" value="Genomic_DNA"/>
</dbReference>
<dbReference type="SMR" id="P0CZ88"/>
<dbReference type="KEGG" id="spg:SpyM3_0262"/>
<dbReference type="HOGENOM" id="CLU_052344_0_2_9"/>
<dbReference type="UniPathway" id="UPA00219"/>
<dbReference type="Proteomes" id="UP000000564">
    <property type="component" value="Chromosome"/>
</dbReference>
<dbReference type="GO" id="GO:0008881">
    <property type="term" value="F:glutamate racemase activity"/>
    <property type="evidence" value="ECO:0007669"/>
    <property type="project" value="UniProtKB-UniRule"/>
</dbReference>
<dbReference type="GO" id="GO:0071555">
    <property type="term" value="P:cell wall organization"/>
    <property type="evidence" value="ECO:0007669"/>
    <property type="project" value="UniProtKB-KW"/>
</dbReference>
<dbReference type="GO" id="GO:0009252">
    <property type="term" value="P:peptidoglycan biosynthetic process"/>
    <property type="evidence" value="ECO:0007669"/>
    <property type="project" value="UniProtKB-UniRule"/>
</dbReference>
<dbReference type="GO" id="GO:0008360">
    <property type="term" value="P:regulation of cell shape"/>
    <property type="evidence" value="ECO:0007669"/>
    <property type="project" value="UniProtKB-KW"/>
</dbReference>
<dbReference type="FunFam" id="3.40.50.1860:FF:000002">
    <property type="entry name" value="Glutamate racemase"/>
    <property type="match status" value="1"/>
</dbReference>
<dbReference type="Gene3D" id="3.40.50.1860">
    <property type="match status" value="2"/>
</dbReference>
<dbReference type="HAMAP" id="MF_00258">
    <property type="entry name" value="Glu_racemase"/>
    <property type="match status" value="1"/>
</dbReference>
<dbReference type="InterPro" id="IPR015942">
    <property type="entry name" value="Asp/Glu/hydantoin_racemase"/>
</dbReference>
<dbReference type="InterPro" id="IPR001920">
    <property type="entry name" value="Asp/Glu_race"/>
</dbReference>
<dbReference type="InterPro" id="IPR033134">
    <property type="entry name" value="Asp/Glu_racemase_AS_2"/>
</dbReference>
<dbReference type="InterPro" id="IPR004391">
    <property type="entry name" value="Glu_race"/>
</dbReference>
<dbReference type="NCBIfam" id="TIGR00067">
    <property type="entry name" value="glut_race"/>
    <property type="match status" value="1"/>
</dbReference>
<dbReference type="NCBIfam" id="NF002035">
    <property type="entry name" value="PRK00865.1-3"/>
    <property type="match status" value="1"/>
</dbReference>
<dbReference type="PANTHER" id="PTHR21198">
    <property type="entry name" value="GLUTAMATE RACEMASE"/>
    <property type="match status" value="1"/>
</dbReference>
<dbReference type="PANTHER" id="PTHR21198:SF2">
    <property type="entry name" value="GLUTAMATE RACEMASE"/>
    <property type="match status" value="1"/>
</dbReference>
<dbReference type="Pfam" id="PF01177">
    <property type="entry name" value="Asp_Glu_race"/>
    <property type="match status" value="1"/>
</dbReference>
<dbReference type="SUPFAM" id="SSF53681">
    <property type="entry name" value="Aspartate/glutamate racemase"/>
    <property type="match status" value="2"/>
</dbReference>
<dbReference type="PROSITE" id="PS00924">
    <property type="entry name" value="ASP_GLU_RACEMASE_2"/>
    <property type="match status" value="1"/>
</dbReference>
<gene>
    <name evidence="1" type="primary">murI</name>
    <name type="synonym">glr</name>
    <name type="ordered locus">SpyM3_0262</name>
</gene>
<feature type="chain" id="PRO_0000095522" description="Glutamate racemase">
    <location>
        <begin position="1"/>
        <end position="264"/>
    </location>
</feature>
<feature type="active site" description="Proton donor/acceptor" evidence="1">
    <location>
        <position position="73"/>
    </location>
</feature>
<feature type="active site" description="Proton donor/acceptor" evidence="1">
    <location>
        <position position="183"/>
    </location>
</feature>
<feature type="binding site" evidence="1">
    <location>
        <begin position="10"/>
        <end position="11"/>
    </location>
    <ligand>
        <name>substrate</name>
    </ligand>
</feature>
<feature type="binding site" evidence="1">
    <location>
        <begin position="42"/>
        <end position="43"/>
    </location>
    <ligand>
        <name>substrate</name>
    </ligand>
</feature>
<feature type="binding site" evidence="1">
    <location>
        <begin position="74"/>
        <end position="75"/>
    </location>
    <ligand>
        <name>substrate</name>
    </ligand>
</feature>
<feature type="binding site" evidence="1">
    <location>
        <begin position="184"/>
        <end position="185"/>
    </location>
    <ligand>
        <name>substrate</name>
    </ligand>
</feature>
<protein>
    <recommendedName>
        <fullName evidence="1">Glutamate racemase</fullName>
        <ecNumber evidence="1">5.1.1.3</ecNumber>
    </recommendedName>
</protein>
<evidence type="ECO:0000255" key="1">
    <source>
        <dbReference type="HAMAP-Rule" id="MF_00258"/>
    </source>
</evidence>
<organism>
    <name type="scientific">Streptococcus pyogenes serotype M3 (strain ATCC BAA-595 / MGAS315)</name>
    <dbReference type="NCBI Taxonomy" id="198466"/>
    <lineage>
        <taxon>Bacteria</taxon>
        <taxon>Bacillati</taxon>
        <taxon>Bacillota</taxon>
        <taxon>Bacilli</taxon>
        <taxon>Lactobacillales</taxon>
        <taxon>Streptococcaceae</taxon>
        <taxon>Streptococcus</taxon>
    </lineage>
</organism>
<reference key="1">
    <citation type="journal article" date="2002" name="Proc. Natl. Acad. Sci. U.S.A.">
        <title>Genome sequence of a serotype M3 strain of group A Streptococcus: phage-encoded toxins, the high-virulence phenotype, and clone emergence.</title>
        <authorList>
            <person name="Beres S.B."/>
            <person name="Sylva G.L."/>
            <person name="Barbian K.D."/>
            <person name="Lei B."/>
            <person name="Hoff J.S."/>
            <person name="Mammarella N.D."/>
            <person name="Liu M.-Y."/>
            <person name="Smoot J.C."/>
            <person name="Porcella S.F."/>
            <person name="Parkins L.D."/>
            <person name="Campbell D.S."/>
            <person name="Smith T.M."/>
            <person name="McCormick J.K."/>
            <person name="Leung D.Y.M."/>
            <person name="Schlievert P.M."/>
            <person name="Musser J.M."/>
        </authorList>
    </citation>
    <scope>NUCLEOTIDE SEQUENCE [LARGE SCALE GENOMIC DNA]</scope>
    <source>
        <strain>ATCC BAA-595 / MGAS315</strain>
    </source>
</reference>
<comment type="function">
    <text evidence="1">Provides the (R)-glutamate required for cell wall biosynthesis.</text>
</comment>
<comment type="catalytic activity">
    <reaction evidence="1">
        <text>L-glutamate = D-glutamate</text>
        <dbReference type="Rhea" id="RHEA:12813"/>
        <dbReference type="ChEBI" id="CHEBI:29985"/>
        <dbReference type="ChEBI" id="CHEBI:29986"/>
        <dbReference type="EC" id="5.1.1.3"/>
    </reaction>
</comment>
<comment type="pathway">
    <text evidence="1">Cell wall biogenesis; peptidoglycan biosynthesis.</text>
</comment>
<comment type="similarity">
    <text evidence="1">Belongs to the aspartate/glutamate racemases family.</text>
</comment>